<proteinExistence type="inferred from homology"/>
<gene>
    <name type="primary">celB</name>
    <name type="ORF">AFLA_118170</name>
</gene>
<comment type="function">
    <text evidence="1">Has endoglucanase activity on substrates containing beta-1,4 glycosidic bonds, like in carboxymethylcellulose (CMC), hydroxyethylcellulose (HEC) and beta-glucan. Involved in the degradation of complex natural cellulosic substrates (By similarity).</text>
</comment>
<comment type="catalytic activity">
    <reaction>
        <text>Endohydrolysis of (1-&gt;4)-beta-D-glucosidic linkages in cellulose, lichenin and cereal beta-D-glucans.</text>
        <dbReference type="EC" id="3.2.1.4"/>
    </reaction>
</comment>
<comment type="subcellular location">
    <subcellularLocation>
        <location evidence="1">Secreted</location>
    </subcellularLocation>
</comment>
<comment type="similarity">
    <text evidence="3">Belongs to the glycosyl hydrolase 7 (cellulase C) family.</text>
</comment>
<sequence>MIWTLAPFVALLPLVTAQQVGTTADAHPRLTTYKCTSQNGCTRQNTSVVLDAATHFIHKKGTQTSCTNSNGLDTAICPDKQTCADNCVVDGITDYASYGVQTKNDTLTLQQYLQTGNATKSLSPRVYLLAEDGENYSMLKLLNQEFTFDVDASTLVCGMNGALYLSEMEASGGKSSLNQAGAKYGTGYCDAQCYTTPWINGEGNTESVGSCCQEMDIWEANARATGLTPHPCNTTGLYECSGSGCGDSGVCDKAGCGFNPYGLGAKDYYGYGLKVNTNETFTVVTQFLTNDNTTSGQLSEIRRLYIQNGQVIQNAAVTSGGKTVDSITKDFCSGEGSAFNRLGGLEEMGHALGRGMVLALSIWNDAGSFMQWLDGGSAGPCNATEGNPALIEKLYPDTHVKFSKIRWGDIGSTYRH</sequence>
<dbReference type="EC" id="3.2.1.4"/>
<dbReference type="EMBL" id="EQ963485">
    <property type="protein sequence ID" value="EED45588.1"/>
    <property type="molecule type" value="Genomic_DNA"/>
</dbReference>
<dbReference type="RefSeq" id="XP_002384524.1">
    <property type="nucleotide sequence ID" value="XM_002384483.1"/>
</dbReference>
<dbReference type="SMR" id="B8NW70"/>
<dbReference type="STRING" id="332952.B8NW70"/>
<dbReference type="GlyCosmos" id="B8NW70">
    <property type="glycosylation" value="8 sites, No reported glycans"/>
</dbReference>
<dbReference type="EnsemblFungi" id="EED45588">
    <property type="protein sequence ID" value="EED45588"/>
    <property type="gene ID" value="AFLA_118170"/>
</dbReference>
<dbReference type="VEuPathDB" id="FungiDB:AFLA_013799"/>
<dbReference type="eggNOG" id="ENOG502SJT6">
    <property type="taxonomic scope" value="Eukaryota"/>
</dbReference>
<dbReference type="HOGENOM" id="CLU_020817_0_1_1"/>
<dbReference type="OMA" id="FSIWNDN"/>
<dbReference type="GO" id="GO:0005576">
    <property type="term" value="C:extracellular region"/>
    <property type="evidence" value="ECO:0007669"/>
    <property type="project" value="UniProtKB-SubCell"/>
</dbReference>
<dbReference type="GO" id="GO:0008810">
    <property type="term" value="F:cellulase activity"/>
    <property type="evidence" value="ECO:0007669"/>
    <property type="project" value="UniProtKB-EC"/>
</dbReference>
<dbReference type="GO" id="GO:0030245">
    <property type="term" value="P:cellulose catabolic process"/>
    <property type="evidence" value="ECO:0007669"/>
    <property type="project" value="UniProtKB-KW"/>
</dbReference>
<dbReference type="CDD" id="cd07999">
    <property type="entry name" value="GH7_CBH_EG"/>
    <property type="match status" value="1"/>
</dbReference>
<dbReference type="FunFam" id="2.70.100.10:FF:000001">
    <property type="entry name" value="Glucanase"/>
    <property type="match status" value="1"/>
</dbReference>
<dbReference type="Gene3D" id="2.70.100.10">
    <property type="entry name" value="Glycoside hydrolase, family 7, domain"/>
    <property type="match status" value="1"/>
</dbReference>
<dbReference type="InterPro" id="IPR013320">
    <property type="entry name" value="ConA-like_dom_sf"/>
</dbReference>
<dbReference type="InterPro" id="IPR001722">
    <property type="entry name" value="Glyco_hydro_7"/>
</dbReference>
<dbReference type="InterPro" id="IPR037019">
    <property type="entry name" value="Glyco_hydro_7_sf"/>
</dbReference>
<dbReference type="PANTHER" id="PTHR33753">
    <property type="entry name" value="1,4-BETA-D-GLUCAN CELLOBIOHYDROLASE B"/>
    <property type="match status" value="1"/>
</dbReference>
<dbReference type="PANTHER" id="PTHR33753:SF1">
    <property type="entry name" value="ENDO-BETA-1,4-GLUCANASE CELB"/>
    <property type="match status" value="1"/>
</dbReference>
<dbReference type="Pfam" id="PF00840">
    <property type="entry name" value="Glyco_hydro_7"/>
    <property type="match status" value="1"/>
</dbReference>
<dbReference type="PRINTS" id="PR00734">
    <property type="entry name" value="GLHYDRLASE7"/>
</dbReference>
<dbReference type="SUPFAM" id="SSF49899">
    <property type="entry name" value="Concanavalin A-like lectins/glucanases"/>
    <property type="match status" value="1"/>
</dbReference>
<accession>B8NW70</accession>
<name>CELB_ASPFN</name>
<evidence type="ECO:0000250" key="1"/>
<evidence type="ECO:0000255" key="2"/>
<evidence type="ECO:0000305" key="3"/>
<feature type="signal peptide" evidence="2">
    <location>
        <begin position="1"/>
        <end position="17"/>
    </location>
</feature>
<feature type="chain" id="PRO_0000395155" description="Probable endo-beta-1,4-glucanase celB">
    <location>
        <begin position="18"/>
        <end position="416"/>
    </location>
</feature>
<feature type="active site" description="Nucleophile" evidence="1">
    <location>
        <position position="214"/>
    </location>
</feature>
<feature type="active site" description="Proton donor" evidence="1">
    <location>
        <position position="219"/>
    </location>
</feature>
<feature type="glycosylation site" description="N-linked (GlcNAc...) asparagine" evidence="2">
    <location>
        <position position="45"/>
    </location>
</feature>
<feature type="glycosylation site" description="N-linked (GlcNAc...) asparagine" evidence="2">
    <location>
        <position position="104"/>
    </location>
</feature>
<feature type="glycosylation site" description="N-linked (GlcNAc...) asparagine" evidence="2">
    <location>
        <position position="117"/>
    </location>
</feature>
<feature type="glycosylation site" description="N-linked (GlcNAc...) asparagine" evidence="2">
    <location>
        <position position="135"/>
    </location>
</feature>
<feature type="glycosylation site" description="N-linked (GlcNAc...) asparagine" evidence="2">
    <location>
        <position position="233"/>
    </location>
</feature>
<feature type="glycosylation site" description="N-linked (GlcNAc...) asparagine" evidence="2">
    <location>
        <position position="278"/>
    </location>
</feature>
<feature type="glycosylation site" description="N-linked (GlcNAc...) asparagine" evidence="2">
    <location>
        <position position="292"/>
    </location>
</feature>
<feature type="glycosylation site" description="N-linked (GlcNAc...) asparagine" evidence="2">
    <location>
        <position position="382"/>
    </location>
</feature>
<protein>
    <recommendedName>
        <fullName>Probable endo-beta-1,4-glucanase celB</fullName>
        <shortName>Endoglucanase celB</shortName>
        <ecNumber>3.2.1.4</ecNumber>
    </recommendedName>
    <alternativeName>
        <fullName>Carboxymethylcellulase celB</fullName>
    </alternativeName>
    <alternativeName>
        <fullName>Cellulase B</fullName>
    </alternativeName>
</protein>
<keyword id="KW-0119">Carbohydrate metabolism</keyword>
<keyword id="KW-0136">Cellulose degradation</keyword>
<keyword id="KW-0325">Glycoprotein</keyword>
<keyword id="KW-0326">Glycosidase</keyword>
<keyword id="KW-0378">Hydrolase</keyword>
<keyword id="KW-0624">Polysaccharide degradation</keyword>
<keyword id="KW-0964">Secreted</keyword>
<keyword id="KW-0732">Signal</keyword>
<reference key="1">
    <citation type="journal article" date="2015" name="Genome Announc.">
        <title>Genome sequence of Aspergillus flavus NRRL 3357, a strain that causes aflatoxin contamination of food and feed.</title>
        <authorList>
            <person name="Nierman W.C."/>
            <person name="Yu J."/>
            <person name="Fedorova-Abrams N.D."/>
            <person name="Losada L."/>
            <person name="Cleveland T.E."/>
            <person name="Bhatnagar D."/>
            <person name="Bennett J.W."/>
            <person name="Dean R."/>
            <person name="Payne G.A."/>
        </authorList>
    </citation>
    <scope>NUCLEOTIDE SEQUENCE [LARGE SCALE GENOMIC DNA]</scope>
    <source>
        <strain>ATCC 200026 / FGSC A1120 / IAM 13836 / NRRL 3357 / JCM 12722 / SRRC 167</strain>
    </source>
</reference>
<organism>
    <name type="scientific">Aspergillus flavus (strain ATCC 200026 / FGSC A1120 / IAM 13836 / NRRL 3357 / JCM 12722 / SRRC 167)</name>
    <dbReference type="NCBI Taxonomy" id="332952"/>
    <lineage>
        <taxon>Eukaryota</taxon>
        <taxon>Fungi</taxon>
        <taxon>Dikarya</taxon>
        <taxon>Ascomycota</taxon>
        <taxon>Pezizomycotina</taxon>
        <taxon>Eurotiomycetes</taxon>
        <taxon>Eurotiomycetidae</taxon>
        <taxon>Eurotiales</taxon>
        <taxon>Aspergillaceae</taxon>
        <taxon>Aspergillus</taxon>
        <taxon>Aspergillus subgen. Circumdati</taxon>
    </lineage>
</organism>